<dbReference type="EC" id="3.2.1.1"/>
<dbReference type="EMBL" id="CU329670">
    <property type="protein sequence ID" value="CAA91249.1"/>
    <property type="molecule type" value="Genomic_DNA"/>
</dbReference>
<dbReference type="PIR" id="T38289">
    <property type="entry name" value="S62505"/>
</dbReference>
<dbReference type="RefSeq" id="NP_594551.1">
    <property type="nucleotide sequence ID" value="NM_001019980.1"/>
</dbReference>
<dbReference type="SMR" id="Q09840"/>
<dbReference type="FunCoup" id="Q09840">
    <property type="interactions" value="124"/>
</dbReference>
<dbReference type="STRING" id="284812.Q09840"/>
<dbReference type="CAZy" id="GH13">
    <property type="family name" value="Glycoside Hydrolase Family 13"/>
</dbReference>
<dbReference type="GlyCosmos" id="Q09840">
    <property type="glycosylation" value="2 sites, No reported glycans"/>
</dbReference>
<dbReference type="PaxDb" id="4896-SPAC23D3.14c.1"/>
<dbReference type="EnsemblFungi" id="SPAC23D3.14c.1">
    <property type="protein sequence ID" value="SPAC23D3.14c.1:pep"/>
    <property type="gene ID" value="SPAC23D3.14c"/>
</dbReference>
<dbReference type="GeneID" id="2541501"/>
<dbReference type="KEGG" id="spo:2541501"/>
<dbReference type="PomBase" id="SPAC23D3.14c">
    <property type="gene designation" value="aah2"/>
</dbReference>
<dbReference type="VEuPathDB" id="FungiDB:SPAC23D3.14c"/>
<dbReference type="eggNOG" id="KOG0471">
    <property type="taxonomic scope" value="Eukaryota"/>
</dbReference>
<dbReference type="HOGENOM" id="CLU_006462_7_2_1"/>
<dbReference type="InParanoid" id="Q09840"/>
<dbReference type="OMA" id="HGYWIAD"/>
<dbReference type="PhylomeDB" id="Q09840"/>
<dbReference type="PRO" id="PR:Q09840"/>
<dbReference type="Proteomes" id="UP000002485">
    <property type="component" value="Chromosome I"/>
</dbReference>
<dbReference type="GO" id="GO:0009897">
    <property type="term" value="C:external side of plasma membrane"/>
    <property type="evidence" value="ECO:0000304"/>
    <property type="project" value="PomBase"/>
</dbReference>
<dbReference type="GO" id="GO:0004556">
    <property type="term" value="F:alpha-amylase activity"/>
    <property type="evidence" value="ECO:0007669"/>
    <property type="project" value="UniProtKB-EC"/>
</dbReference>
<dbReference type="GO" id="GO:0005509">
    <property type="term" value="F:calcium ion binding"/>
    <property type="evidence" value="ECO:0007669"/>
    <property type="project" value="InterPro"/>
</dbReference>
<dbReference type="GO" id="GO:0016052">
    <property type="term" value="P:carbohydrate catabolic process"/>
    <property type="evidence" value="ECO:0007669"/>
    <property type="project" value="InterPro"/>
</dbReference>
<dbReference type="CDD" id="cd11319">
    <property type="entry name" value="AmyAc_euk_AmyA"/>
    <property type="match status" value="1"/>
</dbReference>
<dbReference type="FunFam" id="2.60.40.1180:FF:000037">
    <property type="entry name" value="Alpha-amylase A"/>
    <property type="match status" value="1"/>
</dbReference>
<dbReference type="FunFam" id="3.20.20.80:FF:000120">
    <property type="entry name" value="Alpha-amylase A"/>
    <property type="match status" value="1"/>
</dbReference>
<dbReference type="Gene3D" id="3.20.20.80">
    <property type="entry name" value="Glycosidases"/>
    <property type="match status" value="1"/>
</dbReference>
<dbReference type="Gene3D" id="2.60.40.1180">
    <property type="entry name" value="Golgi alpha-mannosidase II"/>
    <property type="match status" value="1"/>
</dbReference>
<dbReference type="InterPro" id="IPR013777">
    <property type="entry name" value="A-amylase-like"/>
</dbReference>
<dbReference type="InterPro" id="IPR015340">
    <property type="entry name" value="A_amylase_C_dom"/>
</dbReference>
<dbReference type="InterPro" id="IPR006047">
    <property type="entry name" value="Glyco_hydro_13_cat_dom"/>
</dbReference>
<dbReference type="InterPro" id="IPR013780">
    <property type="entry name" value="Glyco_hydro_b"/>
</dbReference>
<dbReference type="InterPro" id="IPR017853">
    <property type="entry name" value="Glycoside_hydrolase_SF"/>
</dbReference>
<dbReference type="PANTHER" id="PTHR10357:SF227">
    <property type="entry name" value="ALPHA-AMYLASE 2"/>
    <property type="match status" value="1"/>
</dbReference>
<dbReference type="PANTHER" id="PTHR10357">
    <property type="entry name" value="ALPHA-AMYLASE FAMILY MEMBER"/>
    <property type="match status" value="1"/>
</dbReference>
<dbReference type="Pfam" id="PF09260">
    <property type="entry name" value="A_amylase_dom_C"/>
    <property type="match status" value="1"/>
</dbReference>
<dbReference type="Pfam" id="PF00128">
    <property type="entry name" value="Alpha-amylase"/>
    <property type="match status" value="1"/>
</dbReference>
<dbReference type="PIRSF" id="PIRSF001024">
    <property type="entry name" value="Alph-amyl_fung"/>
    <property type="match status" value="1"/>
</dbReference>
<dbReference type="SMART" id="SM00642">
    <property type="entry name" value="Aamy"/>
    <property type="match status" value="1"/>
</dbReference>
<dbReference type="SUPFAM" id="SSF51445">
    <property type="entry name" value="(Trans)glycosidases"/>
    <property type="match status" value="1"/>
</dbReference>
<dbReference type="SUPFAM" id="SSF51011">
    <property type="entry name" value="Glycosyl hydrolase domain"/>
    <property type="match status" value="1"/>
</dbReference>
<protein>
    <recommendedName>
        <fullName>Alpha-amylase 2</fullName>
        <ecNumber>3.2.1.1</ecNumber>
    </recommendedName>
    <alternativeName>
        <fullName>1,4-alpha-D-glucan glucanohydrolase</fullName>
    </alternativeName>
</protein>
<organism>
    <name type="scientific">Schizosaccharomyces pombe (strain 972 / ATCC 24843)</name>
    <name type="common">Fission yeast</name>
    <dbReference type="NCBI Taxonomy" id="284812"/>
    <lineage>
        <taxon>Eukaryota</taxon>
        <taxon>Fungi</taxon>
        <taxon>Dikarya</taxon>
        <taxon>Ascomycota</taxon>
        <taxon>Taphrinomycotina</taxon>
        <taxon>Schizosaccharomycetes</taxon>
        <taxon>Schizosaccharomycetales</taxon>
        <taxon>Schizosaccharomycetaceae</taxon>
        <taxon>Schizosaccharomyces</taxon>
    </lineage>
</organism>
<proteinExistence type="evidence at protein level"/>
<feature type="signal peptide" evidence="3">
    <location>
        <begin position="1"/>
        <end position="24"/>
    </location>
</feature>
<feature type="chain" id="PRO_0000001355" description="Alpha-amylase 2">
    <location>
        <begin position="25"/>
        <end position="551"/>
    </location>
</feature>
<feature type="propeptide" id="PRO_0000255452" description="Removed in mature form" evidence="3">
    <location>
        <begin position="552"/>
        <end position="581"/>
    </location>
</feature>
<feature type="active site" description="Nucleophile" evidence="2">
    <location>
        <position position="233"/>
    </location>
</feature>
<feature type="active site" description="Proton donor" evidence="2">
    <location>
        <position position="257"/>
    </location>
</feature>
<feature type="binding site" evidence="1">
    <location>
        <position position="109"/>
    </location>
    <ligand>
        <name>substrate</name>
    </ligand>
</feature>
<feature type="binding site" evidence="1">
    <location>
        <position position="147"/>
    </location>
    <ligand>
        <name>Ca(2+)</name>
        <dbReference type="ChEBI" id="CHEBI:29108"/>
        <label>1</label>
    </ligand>
</feature>
<feature type="binding site" evidence="2">
    <location>
        <position position="202"/>
    </location>
    <ligand>
        <name>Ca(2+)</name>
        <dbReference type="ChEBI" id="CHEBI:29108"/>
        <label>1</label>
    </ligand>
</feature>
<feature type="binding site" evidence="1">
    <location>
        <position position="231"/>
    </location>
    <ligand>
        <name>substrate</name>
    </ligand>
</feature>
<feature type="binding site" evidence="1">
    <location>
        <position position="233"/>
    </location>
    <ligand>
        <name>Ca(2+)</name>
        <dbReference type="ChEBI" id="CHEBI:29108"/>
        <label>2</label>
    </ligand>
</feature>
<feature type="binding site" evidence="1">
    <location>
        <begin position="236"/>
        <end position="237"/>
    </location>
    <ligand>
        <name>substrate</name>
    </ligand>
</feature>
<feature type="binding site" evidence="1">
    <location>
        <position position="237"/>
    </location>
    <ligand>
        <name>Ca(2+)</name>
        <dbReference type="ChEBI" id="CHEBI:29108"/>
        <label>1</label>
    </ligand>
</feature>
<feature type="binding site" evidence="1">
    <location>
        <position position="257"/>
    </location>
    <ligand>
        <name>Ca(2+)</name>
        <dbReference type="ChEBI" id="CHEBI:29108"/>
        <label>2</label>
    </ligand>
</feature>
<feature type="binding site" evidence="1">
    <location>
        <position position="261"/>
    </location>
    <ligand>
        <name>substrate</name>
    </ligand>
</feature>
<feature type="binding site" evidence="1">
    <location>
        <position position="325"/>
    </location>
    <ligand>
        <name>substrate</name>
    </ligand>
</feature>
<feature type="binding site" evidence="1">
    <location>
        <position position="372"/>
    </location>
    <ligand>
        <name>substrate</name>
    </ligand>
</feature>
<feature type="site" description="Transition state stabilizer" evidence="1">
    <location>
        <position position="325"/>
    </location>
</feature>
<feature type="lipid moiety-binding region" description="GPI-anchor amidated serine" evidence="3">
    <location>
        <position position="551"/>
    </location>
</feature>
<feature type="glycosylation site" description="N-linked (GlcNAc...) asparagine" evidence="3">
    <location>
        <position position="291"/>
    </location>
</feature>
<feature type="glycosylation site" description="N-linked (GlcNAc...) asparagine" evidence="3">
    <location>
        <position position="332"/>
    </location>
</feature>
<feature type="disulfide bond" evidence="2">
    <location>
        <begin position="56"/>
        <end position="64"/>
    </location>
</feature>
<feature type="disulfide bond" evidence="2">
    <location>
        <begin position="176"/>
        <end position="191"/>
    </location>
</feature>
<feature type="disulfide bond" evidence="2">
    <location>
        <begin position="267"/>
        <end position="311"/>
    </location>
</feature>
<comment type="catalytic activity">
    <reaction>
        <text>Endohydrolysis of (1-&gt;4)-alpha-D-glucosidic linkages in polysaccharides containing three or more (1-&gt;4)-alpha-linked D-glucose units.</text>
        <dbReference type="EC" id="3.2.1.1"/>
    </reaction>
</comment>
<comment type="cofactor">
    <cofactor evidence="1">
        <name>Ca(2+)</name>
        <dbReference type="ChEBI" id="CHEBI:29108"/>
    </cofactor>
    <text evidence="1">Binds 2 calcium ions per subunit. Calcium is inhibitory at high concentrations.</text>
</comment>
<comment type="subcellular location">
    <subcellularLocation>
        <location evidence="4">Cell membrane</location>
        <topology evidence="4">Lipid-anchor</topology>
        <topology evidence="4">GPI-anchor</topology>
    </subcellularLocation>
</comment>
<comment type="similarity">
    <text evidence="4">Belongs to the glycosyl hydrolase 13 family.</text>
</comment>
<keyword id="KW-0106">Calcium</keyword>
<keyword id="KW-0119">Carbohydrate metabolism</keyword>
<keyword id="KW-1003">Cell membrane</keyword>
<keyword id="KW-1015">Disulfide bond</keyword>
<keyword id="KW-0325">Glycoprotein</keyword>
<keyword id="KW-0326">Glycosidase</keyword>
<keyword id="KW-0336">GPI-anchor</keyword>
<keyword id="KW-0378">Hydrolase</keyword>
<keyword id="KW-0449">Lipoprotein</keyword>
<keyword id="KW-0472">Membrane</keyword>
<keyword id="KW-0479">Metal-binding</keyword>
<keyword id="KW-1185">Reference proteome</keyword>
<keyword id="KW-0732">Signal</keyword>
<accession>Q09840</accession>
<gene>
    <name type="primary">aah2</name>
    <name type="ORF">SPAC23D3.14c</name>
</gene>
<evidence type="ECO:0000250" key="1">
    <source>
        <dbReference type="UniProtKB" id="P0C1B3"/>
    </source>
</evidence>
<evidence type="ECO:0000250" key="2">
    <source>
        <dbReference type="UniProtKB" id="P56271"/>
    </source>
</evidence>
<evidence type="ECO:0000255" key="3"/>
<evidence type="ECO:0000305" key="4"/>
<sequence length="581" mass="67005">MNYRRNICLRIGWMLLFAFIPAYAGHSAEEWKRRSIYQIITDRFSLEEGATERIPCDPVRFMYCGGTWNGIRNHLDYIQGMGFDAIWISPIFENVEGNDIDGSSYHGYWTTNLYELNHHFGTKEEFMELIQELHKRDIWILLDVAINSMAINGPLEQMSFEKVIPFNDASFFHPHCWVDYESNDIESVQNCWLGDENLLLADVDTENEVVLSVLEKWIKNVVQEYDIDGIRFDAIKHAPIEFWLRMSKAADIFTIGEYFTGSPAEACDYQNSGLDSFLNFPLYWPITWAFNNTGLQCEALAIAINQINEECNDINVLGTFIGNHDLPRISHNNTDQARIMNAITFVMMWDGIPIIYYGTEQNFNSYHDPFNREALWLSNFDMENVYYKLIGILNRFRKSVQRQEENYVNTRSTILSVKIHHIVVQKLNVITVLNNYGIHNEERLSIVFKPLGASPKDTFFDIINNQKYVVNTDGTLKVVITNGFPIVLYPTSKIETSLPQFTATLLPEITFVPSITVTTHYVLPTLLAPLGYDIREHPGGQQFWNTLTAKSEAKTIRSFTKLKLFILLIAVPFALPMIILI</sequence>
<reference key="1">
    <citation type="journal article" date="2002" name="Nature">
        <title>The genome sequence of Schizosaccharomyces pombe.</title>
        <authorList>
            <person name="Wood V."/>
            <person name="Gwilliam R."/>
            <person name="Rajandream M.A."/>
            <person name="Lyne M.H."/>
            <person name="Lyne R."/>
            <person name="Stewart A."/>
            <person name="Sgouros J.G."/>
            <person name="Peat N."/>
            <person name="Hayles J."/>
            <person name="Baker S.G."/>
            <person name="Basham D."/>
            <person name="Bowman S."/>
            <person name="Brooks K."/>
            <person name="Brown D."/>
            <person name="Brown S."/>
            <person name="Chillingworth T."/>
            <person name="Churcher C.M."/>
            <person name="Collins M."/>
            <person name="Connor R."/>
            <person name="Cronin A."/>
            <person name="Davis P."/>
            <person name="Feltwell T."/>
            <person name="Fraser A."/>
            <person name="Gentles S."/>
            <person name="Goble A."/>
            <person name="Hamlin N."/>
            <person name="Harris D.E."/>
            <person name="Hidalgo J."/>
            <person name="Hodgson G."/>
            <person name="Holroyd S."/>
            <person name="Hornsby T."/>
            <person name="Howarth S."/>
            <person name="Huckle E.J."/>
            <person name="Hunt S."/>
            <person name="Jagels K."/>
            <person name="James K.D."/>
            <person name="Jones L."/>
            <person name="Jones M."/>
            <person name="Leather S."/>
            <person name="McDonald S."/>
            <person name="McLean J."/>
            <person name="Mooney P."/>
            <person name="Moule S."/>
            <person name="Mungall K.L."/>
            <person name="Murphy L.D."/>
            <person name="Niblett D."/>
            <person name="Odell C."/>
            <person name="Oliver K."/>
            <person name="O'Neil S."/>
            <person name="Pearson D."/>
            <person name="Quail M.A."/>
            <person name="Rabbinowitsch E."/>
            <person name="Rutherford K.M."/>
            <person name="Rutter S."/>
            <person name="Saunders D."/>
            <person name="Seeger K."/>
            <person name="Sharp S."/>
            <person name="Skelton J."/>
            <person name="Simmonds M.N."/>
            <person name="Squares R."/>
            <person name="Squares S."/>
            <person name="Stevens K."/>
            <person name="Taylor K."/>
            <person name="Taylor R.G."/>
            <person name="Tivey A."/>
            <person name="Walsh S.V."/>
            <person name="Warren T."/>
            <person name="Whitehead S."/>
            <person name="Woodward J.R."/>
            <person name="Volckaert G."/>
            <person name="Aert R."/>
            <person name="Robben J."/>
            <person name="Grymonprez B."/>
            <person name="Weltjens I."/>
            <person name="Vanstreels E."/>
            <person name="Rieger M."/>
            <person name="Schaefer M."/>
            <person name="Mueller-Auer S."/>
            <person name="Gabel C."/>
            <person name="Fuchs M."/>
            <person name="Duesterhoeft A."/>
            <person name="Fritzc C."/>
            <person name="Holzer E."/>
            <person name="Moestl D."/>
            <person name="Hilbert H."/>
            <person name="Borzym K."/>
            <person name="Langer I."/>
            <person name="Beck A."/>
            <person name="Lehrach H."/>
            <person name="Reinhardt R."/>
            <person name="Pohl T.M."/>
            <person name="Eger P."/>
            <person name="Zimmermann W."/>
            <person name="Wedler H."/>
            <person name="Wambutt R."/>
            <person name="Purnelle B."/>
            <person name="Goffeau A."/>
            <person name="Cadieu E."/>
            <person name="Dreano S."/>
            <person name="Gloux S."/>
            <person name="Lelaure V."/>
            <person name="Mottier S."/>
            <person name="Galibert F."/>
            <person name="Aves S.J."/>
            <person name="Xiang Z."/>
            <person name="Hunt C."/>
            <person name="Moore K."/>
            <person name="Hurst S.M."/>
            <person name="Lucas M."/>
            <person name="Rochet M."/>
            <person name="Gaillardin C."/>
            <person name="Tallada V.A."/>
            <person name="Garzon A."/>
            <person name="Thode G."/>
            <person name="Daga R.R."/>
            <person name="Cruzado L."/>
            <person name="Jimenez J."/>
            <person name="Sanchez M."/>
            <person name="del Rey F."/>
            <person name="Benito J."/>
            <person name="Dominguez A."/>
            <person name="Revuelta J.L."/>
            <person name="Moreno S."/>
            <person name="Armstrong J."/>
            <person name="Forsburg S.L."/>
            <person name="Cerutti L."/>
            <person name="Lowe T."/>
            <person name="McCombie W.R."/>
            <person name="Paulsen I."/>
            <person name="Potashkin J."/>
            <person name="Shpakovski G.V."/>
            <person name="Ussery D."/>
            <person name="Barrell B.G."/>
            <person name="Nurse P."/>
        </authorList>
    </citation>
    <scope>NUCLEOTIDE SEQUENCE [LARGE SCALE GENOMIC DNA]</scope>
    <source>
        <strain>972 / ATCC 24843</strain>
    </source>
</reference>
<reference key="2">
    <citation type="journal article" date="2003" name="Yeast">
        <title>Genome-wide identification of fungal GPI proteins.</title>
        <authorList>
            <person name="De Groot P.W."/>
            <person name="Hellingwerf K.J."/>
            <person name="Klis F.M."/>
        </authorList>
    </citation>
    <scope>PREDICTION OF GPI-ANCHOR</scope>
</reference>
<reference key="3">
    <citation type="journal article" date="2006" name="Biosci. Biotechnol. Biochem.">
        <title>An alpha-amylase homologue, aah3, encodes a GPI-anchored membrane protein required for cell wall integrity and morphogenesis in Schizosaccharomyces pombe.</title>
        <authorList>
            <person name="Morita T."/>
            <person name="Tanaka N."/>
            <person name="Hosomi A."/>
            <person name="Giga-Hama Y."/>
            <person name="Takegawa K."/>
        </authorList>
    </citation>
    <scope>GENE NAME</scope>
</reference>
<reference key="4">
    <citation type="journal article" date="2006" name="Nat. Biotechnol.">
        <title>ORFeome cloning and global analysis of protein localization in the fission yeast Schizosaccharomyces pombe.</title>
        <authorList>
            <person name="Matsuyama A."/>
            <person name="Arai R."/>
            <person name="Yashiroda Y."/>
            <person name="Shirai A."/>
            <person name="Kamata A."/>
            <person name="Sekido S."/>
            <person name="Kobayashi Y."/>
            <person name="Hashimoto A."/>
            <person name="Hamamoto M."/>
            <person name="Hiraoka Y."/>
            <person name="Horinouchi S."/>
            <person name="Yoshida M."/>
        </authorList>
    </citation>
    <scope>SUBCELLULAR LOCATION [LARGE SCALE ANALYSIS]</scope>
</reference>
<name>AMY2_SCHPO</name>